<reference key="1">
    <citation type="journal article" date="1991" name="Virology">
        <title>Nucleotide sequence of the bacteriophage P22 genes required for DNA packaging.</title>
        <authorList>
            <person name="Eppler K."/>
            <person name="Wyckoff E."/>
            <person name="Goates J."/>
            <person name="Parr R."/>
            <person name="Casjens S."/>
        </authorList>
    </citation>
    <scope>NUCLEOTIDE SEQUENCE [GENOMIC DNA]</scope>
</reference>
<reference key="2">
    <citation type="journal article" date="2000" name="J. Bacteriol.">
        <title>Sequence of the genome of Salmonella bacteriophage P22.</title>
        <authorList>
            <person name="Vander Byl C.S."/>
            <person name="Kropinski A.M.B."/>
        </authorList>
    </citation>
    <scope>NUCLEOTIDE SEQUENCE [LARGE SCALE GENOMIC DNA]</scope>
</reference>
<reference key="3">
    <citation type="journal article" date="2003" name="J. Bacteriol.">
        <title>Corrected sequence of the bacteriophage P22 genome.</title>
        <authorList>
            <person name="Pedulla M.L."/>
            <person name="Ford M.E."/>
            <person name="Karthikeyan T."/>
            <person name="Houtz J.M."/>
            <person name="Hendrix R.W."/>
            <person name="Hatfull G.F."/>
            <person name="Poteete A.R."/>
            <person name="Gilcrease E.B."/>
            <person name="Winn-Stapley D.A."/>
            <person name="Casjens S.R."/>
        </authorList>
    </citation>
    <scope>NUCLEOTIDE SEQUENCE [LARGE SCALE GENOMIC DNA]</scope>
</reference>
<proteinExistence type="predicted"/>
<feature type="chain" id="PRO_0000077779" description="Uncharacterized 7.7 kDa protein in gp5-gp4 intergenic region">
    <location>
        <begin position="1"/>
        <end position="69"/>
    </location>
</feature>
<feature type="region of interest" description="Disordered" evidence="1">
    <location>
        <begin position="48"/>
        <end position="69"/>
    </location>
</feature>
<dbReference type="EMBL" id="M59749">
    <property type="status" value="NOT_ANNOTATED_CDS"/>
    <property type="molecule type" value="Genomic_DNA"/>
</dbReference>
<dbReference type="EMBL" id="AF217253">
    <property type="protein sequence ID" value="AAF75048.1"/>
    <property type="molecule type" value="Genomic_DNA"/>
</dbReference>
<dbReference type="EMBL" id="BK000583">
    <property type="protein sequence ID" value="DAA00988.1"/>
    <property type="molecule type" value="Genomic_DNA"/>
</dbReference>
<dbReference type="PIR" id="H40474">
    <property type="entry name" value="H40474"/>
</dbReference>
<dbReference type="RefSeq" id="NP_059631.1">
    <property type="nucleotide sequence ID" value="NC_002371.2"/>
</dbReference>
<dbReference type="GeneID" id="1262829"/>
<dbReference type="KEGG" id="vg:1262829"/>
<dbReference type="OrthoDB" id="22023at10239"/>
<dbReference type="Proteomes" id="UP000001795">
    <property type="component" value="Segment"/>
</dbReference>
<dbReference type="Proteomes" id="UP000007960">
    <property type="component" value="Segment"/>
</dbReference>
<organism>
    <name type="scientific">Salmonella phage P22</name>
    <name type="common">Bacteriophage P22</name>
    <dbReference type="NCBI Taxonomy" id="10754"/>
    <lineage>
        <taxon>Viruses</taxon>
        <taxon>Duplodnaviria</taxon>
        <taxon>Heunggongvirae</taxon>
        <taxon>Uroviricota</taxon>
        <taxon>Caudoviricetes</taxon>
        <taxon>Lederbergvirus</taxon>
    </lineage>
</organism>
<sequence length="69" mass="7667">MKIAIYKPGGSIMVWGVMAQMKVIDSSELPEYVKDGWLDHPSKLLPVEADDVKPRKGRKPKAVSDADKD</sequence>
<evidence type="ECO:0000256" key="1">
    <source>
        <dbReference type="SAM" id="MobiDB-lite"/>
    </source>
</evidence>
<organismHost>
    <name type="scientific">Salmonella typhimurium</name>
    <dbReference type="NCBI Taxonomy" id="90371"/>
</organismHost>
<keyword id="KW-0426">Late protein</keyword>
<keyword id="KW-1185">Reference proteome</keyword>
<name>Y7K7_BPP22</name>
<accession>P26750</accession>
<accession>Q7PCI4</accession>
<protein>
    <recommendedName>
        <fullName>Uncharacterized 7.7 kDa protein in gp5-gp4 intergenic region</fullName>
    </recommendedName>
    <alternativeName>
        <fullName>ORF 109</fullName>
    </alternativeName>
    <alternativeName>
        <fullName>ORF69</fullName>
    </alternativeName>
</protein>